<name>DRS9_PITHY</name>
<reference key="1">
    <citation type="journal article" date="2006" name="Biochem. Biophys. Res. Commun.">
        <title>Novel dermaseptins from Phyllomedusa hypochondrialis (Amphibia).</title>
        <authorList>
            <person name="Brand G.D."/>
            <person name="Leite J.R.S.A."/>
            <person name="de Sa Mandel S.M."/>
            <person name="Mesquita D.A."/>
            <person name="Silva L.P."/>
            <person name="Prates M.V."/>
            <person name="Barbosa E.A."/>
            <person name="Vinecky F."/>
            <person name="Martins G.R."/>
            <person name="Galasso J.H."/>
            <person name="Kuckelhaus S.A.S."/>
            <person name="Sampaio R.N.R."/>
            <person name="Furtado J.R. Jr."/>
            <person name="Andrade A.C."/>
            <person name="Bloch C. Jr."/>
        </authorList>
    </citation>
    <scope>PROTEIN SEQUENCE</scope>
    <scope>SUBCELLULAR LOCATION</scope>
    <scope>TISSUE SPECIFICITY</scope>
    <scope>AMIDATION AT LEU-33</scope>
    <source>
        <tissue>Skin secretion</tissue>
    </source>
</reference>
<reference key="2">
    <citation type="journal article" date="2008" name="Peptides">
        <title>A consistent nomenclature of antimicrobial peptides isolated from frogs of the subfamily Phyllomedusinae.</title>
        <authorList>
            <person name="Amiche M."/>
            <person name="Ladram A."/>
            <person name="Nicolas P."/>
        </authorList>
    </citation>
    <scope>NOMENCLATURE</scope>
</reference>
<evidence type="ECO:0000250" key="1">
    <source>
        <dbReference type="UniProtKB" id="P83637"/>
    </source>
</evidence>
<evidence type="ECO:0000255" key="2"/>
<evidence type="ECO:0000269" key="3">
    <source>
    </source>
</evidence>
<evidence type="ECO:0000303" key="4">
    <source>
    </source>
</evidence>
<evidence type="ECO:0000303" key="5">
    <source>
    </source>
</evidence>
<keyword id="KW-0027">Amidation</keyword>
<keyword id="KW-0878">Amphibian defense peptide</keyword>
<keyword id="KW-0044">Antibiotic</keyword>
<keyword id="KW-0929">Antimicrobial</keyword>
<keyword id="KW-0903">Direct protein sequencing</keyword>
<keyword id="KW-0964">Secreted</keyword>
<proteinExistence type="evidence at protein level"/>
<organism>
    <name type="scientific">Pithecopus hypochondrialis</name>
    <name type="common">Orange-legged leaf frog</name>
    <name type="synonym">Phyllomedusa hypochondrialis</name>
    <dbReference type="NCBI Taxonomy" id="317381"/>
    <lineage>
        <taxon>Eukaryota</taxon>
        <taxon>Metazoa</taxon>
        <taxon>Chordata</taxon>
        <taxon>Craniata</taxon>
        <taxon>Vertebrata</taxon>
        <taxon>Euteleostomi</taxon>
        <taxon>Amphibia</taxon>
        <taxon>Batrachia</taxon>
        <taxon>Anura</taxon>
        <taxon>Neobatrachia</taxon>
        <taxon>Hyloidea</taxon>
        <taxon>Hylidae</taxon>
        <taxon>Phyllomedusinae</taxon>
        <taxon>Pithecopus</taxon>
    </lineage>
</organism>
<dbReference type="SMR" id="P84880"/>
<dbReference type="GO" id="GO:0005576">
    <property type="term" value="C:extracellular region"/>
    <property type="evidence" value="ECO:0007669"/>
    <property type="project" value="UniProtKB-SubCell"/>
</dbReference>
<dbReference type="GO" id="GO:0042742">
    <property type="term" value="P:defense response to bacterium"/>
    <property type="evidence" value="ECO:0007669"/>
    <property type="project" value="UniProtKB-KW"/>
</dbReference>
<dbReference type="InterPro" id="IPR022731">
    <property type="entry name" value="Dermaseptin_dom"/>
</dbReference>
<dbReference type="Pfam" id="PF12121">
    <property type="entry name" value="DD_K"/>
    <property type="match status" value="1"/>
</dbReference>
<sequence length="33" mass="3211">GLWSTIKQKGKEAAIAAAKAAGQAALNAASEAL</sequence>
<feature type="peptide" id="PRO_0000248499" description="Dermaseptin-H9">
    <location>
        <begin position="1"/>
        <end position="33"/>
    </location>
</feature>
<feature type="modified residue" description="Leucine amide" evidence="3">
    <location>
        <position position="33"/>
    </location>
</feature>
<accession>P84880</accession>
<comment type="function">
    <text evidence="1">Has antimicrobial activity.</text>
</comment>
<comment type="subcellular location">
    <subcellularLocation>
        <location evidence="3">Secreted</location>
    </subcellularLocation>
</comment>
<comment type="tissue specificity">
    <text evidence="3">Expressed by the skin glands.</text>
</comment>
<comment type="similarity">
    <text evidence="2">Belongs to the frog skin active peptide (FSAP) family. Dermaseptin subfamily.</text>
</comment>
<comment type="online information" name="The antimicrobial peptide database">
    <link uri="https://wangapd3.com/database/query_output.php?ID=0950"/>
</comment>
<protein>
    <recommendedName>
        <fullName evidence="5">Dermaseptin-H9</fullName>
        <shortName evidence="5">DRS-H9</shortName>
    </recommendedName>
    <alternativeName>
        <fullName evidence="4">DShypo 07</fullName>
    </alternativeName>
</protein>